<protein>
    <recommendedName>
        <fullName>Cytochrome c oxidase assembly protein COX16, mitochondrial</fullName>
    </recommendedName>
</protein>
<gene>
    <name type="primary">COX16</name>
    <name type="ORF">SNOG_08351</name>
</gene>
<proteinExistence type="inferred from homology"/>
<keyword id="KW-0472">Membrane</keyword>
<keyword id="KW-0496">Mitochondrion</keyword>
<keyword id="KW-0999">Mitochondrion inner membrane</keyword>
<keyword id="KW-0809">Transit peptide</keyword>
<keyword id="KW-0812">Transmembrane</keyword>
<keyword id="KW-1133">Transmembrane helix</keyword>
<reference key="1">
    <citation type="journal article" date="2007" name="Plant Cell">
        <title>Dothideomycete-plant interactions illuminated by genome sequencing and EST analysis of the wheat pathogen Stagonospora nodorum.</title>
        <authorList>
            <person name="Hane J.K."/>
            <person name="Lowe R.G.T."/>
            <person name="Solomon P.S."/>
            <person name="Tan K.-C."/>
            <person name="Schoch C.L."/>
            <person name="Spatafora J.W."/>
            <person name="Crous P.W."/>
            <person name="Kodira C.D."/>
            <person name="Birren B.W."/>
            <person name="Galagan J.E."/>
            <person name="Torriani S.F.F."/>
            <person name="McDonald B.A."/>
            <person name="Oliver R.P."/>
        </authorList>
    </citation>
    <scope>NUCLEOTIDE SEQUENCE [LARGE SCALE GENOMIC DNA]</scope>
    <source>
        <strain>SN15 / ATCC MYA-4574 / FGSC 10173</strain>
    </source>
</reference>
<sequence>MPGPFSSRSFAATLPNSIAARYRKQLQKHPFLLFGLPFMATIVAGSFMLTPATALRYERYDRKNQQITQEEAMGLRQERRKVNMKDEYYRLQAKDLEDWEQRRVKRLPGEPDGTLV</sequence>
<organism>
    <name type="scientific">Phaeosphaeria nodorum (strain SN15 / ATCC MYA-4574 / FGSC 10173)</name>
    <name type="common">Glume blotch fungus</name>
    <name type="synonym">Parastagonospora nodorum</name>
    <dbReference type="NCBI Taxonomy" id="321614"/>
    <lineage>
        <taxon>Eukaryota</taxon>
        <taxon>Fungi</taxon>
        <taxon>Dikarya</taxon>
        <taxon>Ascomycota</taxon>
        <taxon>Pezizomycotina</taxon>
        <taxon>Dothideomycetes</taxon>
        <taxon>Pleosporomycetidae</taxon>
        <taxon>Pleosporales</taxon>
        <taxon>Pleosporineae</taxon>
        <taxon>Phaeosphaeriaceae</taxon>
        <taxon>Parastagonospora</taxon>
    </lineage>
</organism>
<evidence type="ECO:0000250" key="1">
    <source>
        <dbReference type="UniProtKB" id="P47081"/>
    </source>
</evidence>
<evidence type="ECO:0000255" key="2"/>
<evidence type="ECO:0000305" key="3"/>
<feature type="transit peptide" description="Mitochondrion" evidence="2">
    <location>
        <begin position="1"/>
        <end position="10"/>
    </location>
</feature>
<feature type="chain" id="PRO_0000280652" description="Cytochrome c oxidase assembly protein COX16, mitochondrial">
    <location>
        <begin position="11"/>
        <end position="116"/>
    </location>
</feature>
<feature type="transmembrane region" description="Helical" evidence="2">
    <location>
        <begin position="30"/>
        <end position="50"/>
    </location>
</feature>
<comment type="function">
    <text evidence="1">Required for the assembly of the mitochondrial respiratory chain complex IV (CIV), also known as cytochrome c oxidase. May participate in merging the COX1 and COX2 assembly lines.</text>
</comment>
<comment type="subcellular location">
    <subcellularLocation>
        <location evidence="1">Mitochondrion inner membrane</location>
        <topology evidence="1">Single-pass membrane protein</topology>
    </subcellularLocation>
</comment>
<comment type="similarity">
    <text evidence="3">Belongs to the COX16 family.</text>
</comment>
<comment type="sequence caution" evidence="3">
    <conflict type="erroneous gene model prediction">
        <sequence resource="EMBL-CDS" id="EAT84627"/>
    </conflict>
</comment>
<accession>Q0UIR3</accession>
<name>COX16_PHANO</name>
<dbReference type="EMBL" id="CH445336">
    <property type="protein sequence ID" value="EAT84627.2"/>
    <property type="status" value="ALT_SEQ"/>
    <property type="molecule type" value="Genomic_DNA"/>
</dbReference>
<dbReference type="RefSeq" id="XP_001798670.1">
    <property type="nucleotide sequence ID" value="XM_001798618.1"/>
</dbReference>
<dbReference type="FunCoup" id="Q0UIR3">
    <property type="interactions" value="123"/>
</dbReference>
<dbReference type="STRING" id="321614.Q0UIR3"/>
<dbReference type="GeneID" id="5975568"/>
<dbReference type="KEGG" id="pno:SNOG_08351"/>
<dbReference type="VEuPathDB" id="FungiDB:JI435_083510"/>
<dbReference type="eggNOG" id="ENOG502S9GT">
    <property type="taxonomic scope" value="Eukaryota"/>
</dbReference>
<dbReference type="InParanoid" id="Q0UIR3"/>
<dbReference type="OrthoDB" id="5516033at2759"/>
<dbReference type="Proteomes" id="UP000001055">
    <property type="component" value="Unassembled WGS sequence"/>
</dbReference>
<dbReference type="GO" id="GO:0005743">
    <property type="term" value="C:mitochondrial inner membrane"/>
    <property type="evidence" value="ECO:0000318"/>
    <property type="project" value="GO_Central"/>
</dbReference>
<dbReference type="GO" id="GO:0033617">
    <property type="term" value="P:mitochondrial cytochrome c oxidase assembly"/>
    <property type="evidence" value="ECO:0000318"/>
    <property type="project" value="GO_Central"/>
</dbReference>
<dbReference type="InterPro" id="IPR020164">
    <property type="entry name" value="Cyt_c_Oxase_assmbl_COX16"/>
</dbReference>
<dbReference type="PANTHER" id="PTHR17130:SF14">
    <property type="entry name" value="CYTOCHROME C OXIDASE ASSEMBLY PROTEIN COX16 HOMOLOG, MITOCHONDRIAL"/>
    <property type="match status" value="1"/>
</dbReference>
<dbReference type="PANTHER" id="PTHR17130">
    <property type="entry name" value="MITOCHONDRIAL OUTER MEMBRANE PROTEIN 25"/>
    <property type="match status" value="1"/>
</dbReference>
<dbReference type="Pfam" id="PF14138">
    <property type="entry name" value="COX16"/>
    <property type="match status" value="1"/>
</dbReference>